<feature type="chain" id="PRO_0000106625" description="Excisionase">
    <location>
        <begin position="1"/>
        <end position="147"/>
    </location>
</feature>
<sequence>MHGMGYDSRLDRLAATSWYPFFNNVTARGEIMEPYSLTLDEACDFLKISRPTAINWIRTGRLQATRKDPTKSKSPYLTTRQACIAALQSPLHTVQVSAGDGITEERKCHSSAEVKYGTPVSHCRTVKDLNSLLEQRTKGRRQNSMTS</sequence>
<keyword id="KW-0233">DNA recombination</keyword>
<keyword id="KW-0238">DNA-binding</keyword>
<keyword id="KW-1185">Reference proteome</keyword>
<keyword id="KW-1250">Viral genome excision</keyword>
<organism>
    <name type="scientific">Shigella phage SfV</name>
    <name type="common">Shigella flexneri bacteriophage V</name>
    <name type="synonym">Bacteriophage SfV</name>
    <dbReference type="NCBI Taxonomy" id="55884"/>
    <lineage>
        <taxon>Viruses</taxon>
        <taxon>Duplodnaviria</taxon>
        <taxon>Heunggongvirae</taxon>
        <taxon>Uroviricota</taxon>
        <taxon>Caudoviricetes</taxon>
    </lineage>
</organism>
<dbReference type="EMBL" id="U82619">
    <property type="protein sequence ID" value="AAB72136.1"/>
    <property type="molecule type" value="Genomic_DNA"/>
</dbReference>
<dbReference type="RefSeq" id="NP_599059.1">
    <property type="nucleotide sequence ID" value="NC_003444.1"/>
</dbReference>
<dbReference type="SMR" id="O22010"/>
<dbReference type="GeneID" id="935203"/>
<dbReference type="KEGG" id="vg:935203"/>
<dbReference type="OrthoDB" id="14607at10239"/>
<dbReference type="Proteomes" id="UP000009068">
    <property type="component" value="Genome"/>
</dbReference>
<dbReference type="GO" id="GO:0003677">
    <property type="term" value="F:DNA binding"/>
    <property type="evidence" value="ECO:0007669"/>
    <property type="project" value="UniProtKB-KW"/>
</dbReference>
<dbReference type="GO" id="GO:0006310">
    <property type="term" value="P:DNA recombination"/>
    <property type="evidence" value="ECO:0007669"/>
    <property type="project" value="UniProtKB-KW"/>
</dbReference>
<dbReference type="GO" id="GO:0032359">
    <property type="term" value="P:provirus excision"/>
    <property type="evidence" value="ECO:0007669"/>
    <property type="project" value="UniProtKB-KW"/>
</dbReference>
<dbReference type="InterPro" id="IPR041657">
    <property type="entry name" value="HTH_17"/>
</dbReference>
<dbReference type="Pfam" id="PF12728">
    <property type="entry name" value="HTH_17"/>
    <property type="match status" value="1"/>
</dbReference>
<accession>O22010</accession>
<protein>
    <recommendedName>
        <fullName>Excisionase</fullName>
    </recommendedName>
</protein>
<proteinExistence type="inferred from homology"/>
<reference key="1">
    <citation type="journal article" date="1997" name="Gene">
        <title>Shigella flexneri type-specific antigen V: cloning, sequencing and characterization of the glucosyl transferase gene of temperate bacteriophage SfV.</title>
        <authorList>
            <person name="Huan P.T."/>
            <person name="Whittle B.L."/>
            <person name="Bastin D.A."/>
            <person name="Lindberg A.A."/>
            <person name="Verma N.K."/>
        </authorList>
    </citation>
    <scope>NUCLEOTIDE SEQUENCE [GENOMIC DNA]</scope>
</reference>
<reference key="2">
    <citation type="journal article" date="2002" name="J. Bacteriol.">
        <title>Complete genomic sequence of SfV, a serotype-converting temperate bacteriophage of Shigella flexneri.</title>
        <authorList>
            <person name="Allison G.E."/>
            <person name="Angeles D."/>
            <person name="Tran-Dinh N."/>
            <person name="Verma N.K."/>
        </authorList>
    </citation>
    <scope>NUCLEOTIDE SEQUENCE [LARGE SCALE GENOMIC DNA]</scope>
</reference>
<gene>
    <name type="primary">xis</name>
    <name type="synonym">27</name>
</gene>
<organismHost>
    <name type="scientific">Shigella flexneri</name>
    <dbReference type="NCBI Taxonomy" id="623"/>
</organismHost>
<comment type="function">
    <text evidence="1">Excisionase and integrase are necessary for the excision of prophage from the host genome by site-specific recombination.</text>
</comment>
<evidence type="ECO:0000250" key="1"/>
<name>VXIS_BPSF5</name>